<proteinExistence type="inferred from homology"/>
<organism>
    <name type="scientific">Zea mays</name>
    <name type="common">Maize</name>
    <dbReference type="NCBI Taxonomy" id="4577"/>
    <lineage>
        <taxon>Eukaryota</taxon>
        <taxon>Viridiplantae</taxon>
        <taxon>Streptophyta</taxon>
        <taxon>Embryophyta</taxon>
        <taxon>Tracheophyta</taxon>
        <taxon>Spermatophyta</taxon>
        <taxon>Magnoliopsida</taxon>
        <taxon>Liliopsida</taxon>
        <taxon>Poales</taxon>
        <taxon>Poaceae</taxon>
        <taxon>PACMAD clade</taxon>
        <taxon>Panicoideae</taxon>
        <taxon>Andropogonodae</taxon>
        <taxon>Andropogoneae</taxon>
        <taxon>Tripsacinae</taxon>
        <taxon>Zea</taxon>
    </lineage>
</organism>
<accession>Q08277</accession>
<comment type="function">
    <text evidence="1">Molecular chaperone that promotes the maturation, structural maintenance and proper regulation of specific target proteins involved for instance in cell cycle control and signal transduction. Undergoes a functional cycle that is linked to its ATPase activity. This cycle probably induces conformational changes in the client proteins, thereby causing their activation. Interacts dynamically with various co-chaperones that modulate its substrate recognition, ATPase cycle and chaperone function (By similarity).</text>
</comment>
<comment type="subunit">
    <text evidence="1">Homodimer.</text>
</comment>
<comment type="subcellular location">
    <subcellularLocation>
        <location evidence="3">Cytoplasm</location>
    </subcellularLocation>
</comment>
<comment type="domain">
    <text evidence="1">The TPR repeat-binding motif mediates interaction with TPR repeat-containing proteins.</text>
</comment>
<comment type="similarity">
    <text evidence="3">Belongs to the heat shock protein 90 family.</text>
</comment>
<feature type="chain" id="PRO_0000062950" description="Heat shock protein 82">
    <location>
        <begin position="1"/>
        <end position="715"/>
    </location>
</feature>
<feature type="region of interest" description="Disordered" evidence="2">
    <location>
        <begin position="226"/>
        <end position="262"/>
    </location>
</feature>
<feature type="region of interest" description="Disordered" evidence="2">
    <location>
        <begin position="693"/>
        <end position="715"/>
    </location>
</feature>
<feature type="short sequence motif" description="TPR repeat-binding">
    <location>
        <begin position="711"/>
        <end position="715"/>
    </location>
</feature>
<feature type="compositionally biased region" description="Acidic residues" evidence="2">
    <location>
        <begin position="243"/>
        <end position="253"/>
    </location>
</feature>
<feature type="binding site" evidence="1">
    <location>
        <position position="48"/>
    </location>
    <ligand>
        <name>ATP</name>
        <dbReference type="ChEBI" id="CHEBI:30616"/>
    </ligand>
</feature>
<feature type="binding site" evidence="1">
    <location>
        <position position="90"/>
    </location>
    <ligand>
        <name>ATP</name>
        <dbReference type="ChEBI" id="CHEBI:30616"/>
    </ligand>
</feature>
<feature type="binding site" evidence="1">
    <location>
        <position position="136"/>
    </location>
    <ligand>
        <name>ATP</name>
        <dbReference type="ChEBI" id="CHEBI:30616"/>
    </ligand>
</feature>
<feature type="binding site" evidence="1">
    <location>
        <position position="386"/>
    </location>
    <ligand>
        <name>ATP</name>
        <dbReference type="ChEBI" id="CHEBI:30616"/>
    </ligand>
</feature>
<name>HSP82_MAIZE</name>
<reference key="1">
    <citation type="journal article" date="1993" name="Dev. Genet.">
        <title>Characterization of two maize HSP90 heat shock protein genes: expression during heat shock, embryogenesis, and pollen development.</title>
        <authorList>
            <person name="Marrs K.A."/>
            <person name="Casey E.S."/>
            <person name="Capitant S.A."/>
            <person name="Bouchard R.A."/>
            <person name="Dietrich P.S."/>
            <person name="Mettler I.J."/>
            <person name="Sinibaldi R.M."/>
        </authorList>
    </citation>
    <scope>NUCLEOTIDE SEQUENCE [GENOMIC DNA]</scope>
    <source>
        <tissue>Leaf</tissue>
        <tissue>Seedling</tissue>
    </source>
</reference>
<evidence type="ECO:0000250" key="1"/>
<evidence type="ECO:0000256" key="2">
    <source>
        <dbReference type="SAM" id="MobiDB-lite"/>
    </source>
</evidence>
<evidence type="ECO:0000305" key="3"/>
<sequence length="715" mass="81891">MASADVHMAGGAETETFAFQAEINQLLSLIINTFYSNKEIFLRELISNASDALDKIRFESLTDKSNVNAQPELFIRLVPDKASKTLSIIDSGVGMTKSDLVNNLGTIARSGTKEFMEALAAGATDVSMIGQFGVGFYSAYLVADRVMVTTKHNDDEQYVWESQAGGSFTVTHDTTGEQLGRGTKITLFLKDDQLEYLEERRLKDLVKKHSEFISYPIYLWTEKTTEKEISDDEEEEDNKKEEEGDVEEVDDEDKDTKDKSKKKKKVKEVSHEWVQINKQKPIWLRKPEEITRDEYASFYKSLTNDWEDHLAVKHFSVEGQLEFKAILFVPRRAPFDLFDTRKKLNNIKLYVRRVFIMDNCEELIPEWLGFVKGVVDSDDLPLNISRETLQQNKILKVIRKNLVKKCIEMFFEIAENKDDYAKFYDAFSKNIKLGIHEDSQNRAKLADLLRYHSTKSGDETTSLKDYVTRMKEGQKDIYYITGESRKAVENSPFLERLKKKGYEVLFMVDAIDEYAVGQLKEYDGKKLVSATKEGLKLDDEDDEEAKKRREERKKRFEELCKVIKDILGDRVEKVVVSDRIVDSPCCLVTGEYGWTANMERIMKAQALRDSSMSAYMSSKKTMEINPDNGIMEELRKRAEADRNDKSVKDLVLLLFETALLTSGFSLDDPNTFAARIHRMLKLGLNIDEDAAADEDADMPALDEGAAEESKMEEVD</sequence>
<dbReference type="EMBL" id="S59780">
    <property type="protein sequence ID" value="AAB26482.2"/>
    <property type="molecule type" value="Genomic_DNA"/>
</dbReference>
<dbReference type="PIR" id="A48426">
    <property type="entry name" value="A48426"/>
</dbReference>
<dbReference type="SMR" id="Q08277"/>
<dbReference type="STRING" id="4577.Q08277"/>
<dbReference type="PaxDb" id="4577-GRMZM5G833699_P01"/>
<dbReference type="MaizeGDB" id="65833"/>
<dbReference type="eggNOG" id="KOG0019">
    <property type="taxonomic scope" value="Eukaryota"/>
</dbReference>
<dbReference type="InParanoid" id="Q08277"/>
<dbReference type="Proteomes" id="UP000007305">
    <property type="component" value="Unplaced"/>
</dbReference>
<dbReference type="ExpressionAtlas" id="Q08277">
    <property type="expression patterns" value="baseline and differential"/>
</dbReference>
<dbReference type="GO" id="GO:0005829">
    <property type="term" value="C:cytosol"/>
    <property type="evidence" value="ECO:0000318"/>
    <property type="project" value="GO_Central"/>
</dbReference>
<dbReference type="GO" id="GO:0048471">
    <property type="term" value="C:perinuclear region of cytoplasm"/>
    <property type="evidence" value="ECO:0000318"/>
    <property type="project" value="GO_Central"/>
</dbReference>
<dbReference type="GO" id="GO:0005886">
    <property type="term" value="C:plasma membrane"/>
    <property type="evidence" value="ECO:0000318"/>
    <property type="project" value="GO_Central"/>
</dbReference>
<dbReference type="GO" id="GO:0032991">
    <property type="term" value="C:protein-containing complex"/>
    <property type="evidence" value="ECO:0000318"/>
    <property type="project" value="GO_Central"/>
</dbReference>
<dbReference type="GO" id="GO:0005524">
    <property type="term" value="F:ATP binding"/>
    <property type="evidence" value="ECO:0000318"/>
    <property type="project" value="GO_Central"/>
</dbReference>
<dbReference type="GO" id="GO:0016887">
    <property type="term" value="F:ATP hydrolysis activity"/>
    <property type="evidence" value="ECO:0000318"/>
    <property type="project" value="GO_Central"/>
</dbReference>
<dbReference type="GO" id="GO:0140662">
    <property type="term" value="F:ATP-dependent protein folding chaperone"/>
    <property type="evidence" value="ECO:0007669"/>
    <property type="project" value="InterPro"/>
</dbReference>
<dbReference type="GO" id="GO:0051082">
    <property type="term" value="F:unfolded protein binding"/>
    <property type="evidence" value="ECO:0000318"/>
    <property type="project" value="GO_Central"/>
</dbReference>
<dbReference type="GO" id="GO:0034605">
    <property type="term" value="P:cellular response to heat"/>
    <property type="evidence" value="ECO:0000318"/>
    <property type="project" value="GO_Central"/>
</dbReference>
<dbReference type="GO" id="GO:0006457">
    <property type="term" value="P:protein folding"/>
    <property type="evidence" value="ECO:0000318"/>
    <property type="project" value="GO_Central"/>
</dbReference>
<dbReference type="GO" id="GO:0050821">
    <property type="term" value="P:protein stabilization"/>
    <property type="evidence" value="ECO:0000318"/>
    <property type="project" value="GO_Central"/>
</dbReference>
<dbReference type="CDD" id="cd16927">
    <property type="entry name" value="HATPase_Hsp90-like"/>
    <property type="match status" value="1"/>
</dbReference>
<dbReference type="FunFam" id="3.30.565.10:FF:000012">
    <property type="entry name" value="Heat shock cognate protein"/>
    <property type="match status" value="1"/>
</dbReference>
<dbReference type="FunFam" id="1.20.120.790:FF:000001">
    <property type="entry name" value="Heat shock protein 90 alpha"/>
    <property type="match status" value="1"/>
</dbReference>
<dbReference type="FunFam" id="3.30.230.80:FF:000001">
    <property type="entry name" value="Heat shock protein 90 alpha"/>
    <property type="match status" value="1"/>
</dbReference>
<dbReference type="FunFam" id="3.40.50.11260:FF:000001">
    <property type="entry name" value="Heat shock protein 90 alpha"/>
    <property type="match status" value="1"/>
</dbReference>
<dbReference type="Gene3D" id="3.30.230.80">
    <property type="match status" value="1"/>
</dbReference>
<dbReference type="Gene3D" id="3.40.50.11260">
    <property type="match status" value="1"/>
</dbReference>
<dbReference type="Gene3D" id="1.20.120.790">
    <property type="entry name" value="Heat shock protein 90, C-terminal domain"/>
    <property type="match status" value="1"/>
</dbReference>
<dbReference type="Gene3D" id="3.30.565.10">
    <property type="entry name" value="Histidine kinase-like ATPase, C-terminal domain"/>
    <property type="match status" value="1"/>
</dbReference>
<dbReference type="HAMAP" id="MF_00505">
    <property type="entry name" value="HSP90"/>
    <property type="match status" value="1"/>
</dbReference>
<dbReference type="InterPro" id="IPR036890">
    <property type="entry name" value="HATPase_C_sf"/>
</dbReference>
<dbReference type="InterPro" id="IPR019805">
    <property type="entry name" value="Heat_shock_protein_90_CS"/>
</dbReference>
<dbReference type="InterPro" id="IPR037196">
    <property type="entry name" value="HSP90_C"/>
</dbReference>
<dbReference type="InterPro" id="IPR001404">
    <property type="entry name" value="Hsp90_fam"/>
</dbReference>
<dbReference type="InterPro" id="IPR020575">
    <property type="entry name" value="Hsp90_N"/>
</dbReference>
<dbReference type="InterPro" id="IPR020568">
    <property type="entry name" value="Ribosomal_Su5_D2-typ_SF"/>
</dbReference>
<dbReference type="NCBIfam" id="NF003555">
    <property type="entry name" value="PRK05218.1"/>
    <property type="match status" value="1"/>
</dbReference>
<dbReference type="PANTHER" id="PTHR11528">
    <property type="entry name" value="HEAT SHOCK PROTEIN 90 FAMILY MEMBER"/>
    <property type="match status" value="1"/>
</dbReference>
<dbReference type="Pfam" id="PF13589">
    <property type="entry name" value="HATPase_c_3"/>
    <property type="match status" value="1"/>
</dbReference>
<dbReference type="Pfam" id="PF00183">
    <property type="entry name" value="HSP90"/>
    <property type="match status" value="1"/>
</dbReference>
<dbReference type="PIRSF" id="PIRSF002583">
    <property type="entry name" value="Hsp90"/>
    <property type="match status" value="1"/>
</dbReference>
<dbReference type="PRINTS" id="PR00775">
    <property type="entry name" value="HEATSHOCK90"/>
</dbReference>
<dbReference type="SMART" id="SM00387">
    <property type="entry name" value="HATPase_c"/>
    <property type="match status" value="1"/>
</dbReference>
<dbReference type="SUPFAM" id="SSF55874">
    <property type="entry name" value="ATPase domain of HSP90 chaperone/DNA topoisomerase II/histidine kinase"/>
    <property type="match status" value="1"/>
</dbReference>
<dbReference type="SUPFAM" id="SSF110942">
    <property type="entry name" value="HSP90 C-terminal domain"/>
    <property type="match status" value="1"/>
</dbReference>
<dbReference type="SUPFAM" id="SSF54211">
    <property type="entry name" value="Ribosomal protein S5 domain 2-like"/>
    <property type="match status" value="1"/>
</dbReference>
<dbReference type="PROSITE" id="PS00298">
    <property type="entry name" value="HSP90"/>
    <property type="match status" value="1"/>
</dbReference>
<protein>
    <recommendedName>
        <fullName>Heat shock protein 82</fullName>
    </recommendedName>
</protein>
<gene>
    <name type="primary">HSP82</name>
</gene>
<keyword id="KW-0067">ATP-binding</keyword>
<keyword id="KW-0143">Chaperone</keyword>
<keyword id="KW-0963">Cytoplasm</keyword>
<keyword id="KW-0547">Nucleotide-binding</keyword>
<keyword id="KW-1185">Reference proteome</keyword>
<keyword id="KW-0346">Stress response</keyword>